<name>Y627_BARHE</name>
<organism>
    <name type="scientific">Bartonella henselae (strain ATCC 49882 / DSM 28221 / CCUG 30454 / Houston 1)</name>
    <name type="common">Rochalimaea henselae</name>
    <dbReference type="NCBI Taxonomy" id="283166"/>
    <lineage>
        <taxon>Bacteria</taxon>
        <taxon>Pseudomonadati</taxon>
        <taxon>Pseudomonadota</taxon>
        <taxon>Alphaproteobacteria</taxon>
        <taxon>Hyphomicrobiales</taxon>
        <taxon>Bartonellaceae</taxon>
        <taxon>Bartonella</taxon>
    </lineage>
</organism>
<gene>
    <name type="ordered locus">BH06270</name>
</gene>
<comment type="cofactor">
    <cofactor evidence="3">
        <name>Zn(2+)</name>
        <dbReference type="ChEBI" id="CHEBI:29105"/>
    </cofactor>
</comment>
<comment type="subcellular location">
    <subcellularLocation>
        <location evidence="1">Cell inner membrane</location>
        <topology evidence="1">Multi-pass membrane protein</topology>
    </subcellularLocation>
</comment>
<comment type="similarity">
    <text evidence="3">Belongs to the peptidase M50B family.</text>
</comment>
<comment type="sequence caution" evidence="3">
    <conflict type="erroneous initiation">
        <sequence resource="EMBL-CDS" id="CAF27431"/>
    </conflict>
</comment>
<feature type="chain" id="PRO_0000088430" description="Putative zinc metalloprotease BH06270">
    <location>
        <begin position="1"/>
        <end position="358"/>
    </location>
</feature>
<feature type="transmembrane region" description="Helical" evidence="2">
    <location>
        <begin position="89"/>
        <end position="111"/>
    </location>
</feature>
<feature type="transmembrane region" description="Helical" evidence="2">
    <location>
        <begin position="282"/>
        <end position="304"/>
    </location>
</feature>
<feature type="transmembrane region" description="Helical" evidence="2">
    <location>
        <begin position="332"/>
        <end position="354"/>
    </location>
</feature>
<feature type="domain" description="PDZ">
    <location>
        <begin position="102"/>
        <end position="177"/>
    </location>
</feature>
<feature type="active site" evidence="2">
    <location>
        <position position="8"/>
    </location>
</feature>
<feature type="binding site" evidence="2">
    <location>
        <position position="7"/>
    </location>
    <ligand>
        <name>Zn(2+)</name>
        <dbReference type="ChEBI" id="CHEBI:29105"/>
        <note>catalytic</note>
    </ligand>
</feature>
<feature type="binding site" evidence="2">
    <location>
        <position position="11"/>
    </location>
    <ligand>
        <name>Zn(2+)</name>
        <dbReference type="ChEBI" id="CHEBI:29105"/>
        <note>catalytic</note>
    </ligand>
</feature>
<feature type="sequence conflict" description="In Ref. 1; AAL66373." evidence="3" ref="1">
    <original>T</original>
    <variation>S</variation>
    <location>
        <position position="321"/>
    </location>
</feature>
<sequence length="358" mass="39715">MIIIFVHEAGHYLIGRWCGIKASVFSLGFGPQIVGYTDKRGTQWRLALIPLGGYVKFIGDEEGLHGTSSQSLPIVDGSFGSAHAWKKAATVFAGPLFNVLFTVVILTFFFFTYGRVAIEPVVGSFVKDSPAVQAGLQLGDRFIEMDGQQVESFEDLMNYVTFHGGDPIEFKMERSGQVFTTVITPKVVERDDGFGNRVRSGLMGVGVPVDPDNPARLDPAYVKHIRYSFGRALREASKRATFIVTQTVFFMGRLLGGKEDHCRLSGPSKTVKIAWQVSETGFLSLLNFTAFLSIGVGLINLFPIPPLDGGYLLFHVVEIITGRPISAKIREIIFRLGLCFVLLFMFFALFNDYFCWFS</sequence>
<reference key="1">
    <citation type="submission" date="2001-12" db="EMBL/GenBank/DDBJ databases">
        <title>Cloning, nucleotide sequencing, and expression of a hemin-binding protein of Bartonella henselae.</title>
        <authorList>
            <person name="Zimmermann R."/>
            <person name="Augustin K."/>
            <person name="Schaal K."/>
            <person name="Sander A."/>
        </authorList>
    </citation>
    <scope>NUCLEOTIDE SEQUENCE [GENOMIC DNA]</scope>
</reference>
<reference key="2">
    <citation type="journal article" date="2004" name="Proc. Natl. Acad. Sci. U.S.A.">
        <title>The louse-borne human pathogen Bartonella quintana is a genomic derivative of the zoonotic agent Bartonella henselae.</title>
        <authorList>
            <person name="Alsmark U.C.M."/>
            <person name="Frank A.C."/>
            <person name="Karlberg E.O."/>
            <person name="Legault B.-A."/>
            <person name="Ardell D.H."/>
            <person name="Canbaeck B."/>
            <person name="Eriksson A.-S."/>
            <person name="Naeslund A.K."/>
            <person name="Handley S.A."/>
            <person name="Huvet M."/>
            <person name="La Scola B."/>
            <person name="Holmberg M."/>
            <person name="Andersson S.G.E."/>
        </authorList>
    </citation>
    <scope>NUCLEOTIDE SEQUENCE [LARGE SCALE GENOMIC DNA]</scope>
    <source>
        <strain>ATCC 49882 / DSM 28221 / CCUG 30454 / Houston 1</strain>
    </source>
</reference>
<accession>Q8VQ25</accession>
<accession>Q6G5C4</accession>
<evidence type="ECO:0000250" key="1"/>
<evidence type="ECO:0000255" key="2"/>
<evidence type="ECO:0000305" key="3"/>
<proteinExistence type="inferred from homology"/>
<dbReference type="EC" id="3.4.24.-"/>
<dbReference type="EMBL" id="AF461795">
    <property type="protein sequence ID" value="AAL66373.1"/>
    <property type="molecule type" value="Genomic_DNA"/>
</dbReference>
<dbReference type="EMBL" id="BX897699">
    <property type="protein sequence ID" value="CAF27431.1"/>
    <property type="status" value="ALT_INIT"/>
    <property type="molecule type" value="Genomic_DNA"/>
</dbReference>
<dbReference type="SMR" id="Q8VQ25"/>
<dbReference type="PaxDb" id="283166-BH06270"/>
<dbReference type="EnsemblBacteria" id="CAF27431">
    <property type="protein sequence ID" value="CAF27431"/>
    <property type="gene ID" value="BH06270"/>
</dbReference>
<dbReference type="KEGG" id="bhe:BH06270"/>
<dbReference type="eggNOG" id="COG0750">
    <property type="taxonomic scope" value="Bacteria"/>
</dbReference>
<dbReference type="Proteomes" id="UP000000421">
    <property type="component" value="Chromosome"/>
</dbReference>
<dbReference type="GO" id="GO:0005886">
    <property type="term" value="C:plasma membrane"/>
    <property type="evidence" value="ECO:0007669"/>
    <property type="project" value="UniProtKB-SubCell"/>
</dbReference>
<dbReference type="GO" id="GO:0046872">
    <property type="term" value="F:metal ion binding"/>
    <property type="evidence" value="ECO:0007669"/>
    <property type="project" value="UniProtKB-KW"/>
</dbReference>
<dbReference type="GO" id="GO:0004222">
    <property type="term" value="F:metalloendopeptidase activity"/>
    <property type="evidence" value="ECO:0007669"/>
    <property type="project" value="InterPro"/>
</dbReference>
<dbReference type="GO" id="GO:0006508">
    <property type="term" value="P:proteolysis"/>
    <property type="evidence" value="ECO:0007669"/>
    <property type="project" value="UniProtKB-KW"/>
</dbReference>
<dbReference type="CDD" id="cd23081">
    <property type="entry name" value="cpPDZ_EcRseP-like"/>
    <property type="match status" value="1"/>
</dbReference>
<dbReference type="CDD" id="cd06163">
    <property type="entry name" value="S2P-M50_PDZ_RseP-like"/>
    <property type="match status" value="1"/>
</dbReference>
<dbReference type="Gene3D" id="2.30.42.10">
    <property type="match status" value="1"/>
</dbReference>
<dbReference type="InterPro" id="IPR001478">
    <property type="entry name" value="PDZ"/>
</dbReference>
<dbReference type="InterPro" id="IPR036034">
    <property type="entry name" value="PDZ_sf"/>
</dbReference>
<dbReference type="InterPro" id="IPR004387">
    <property type="entry name" value="Pept_M50_Zn"/>
</dbReference>
<dbReference type="InterPro" id="IPR008915">
    <property type="entry name" value="Peptidase_M50"/>
</dbReference>
<dbReference type="NCBIfam" id="TIGR00054">
    <property type="entry name" value="RIP metalloprotease RseP"/>
    <property type="match status" value="1"/>
</dbReference>
<dbReference type="PANTHER" id="PTHR42837:SF2">
    <property type="entry name" value="MEMBRANE METALLOPROTEASE ARASP2, CHLOROPLASTIC-RELATED"/>
    <property type="match status" value="1"/>
</dbReference>
<dbReference type="PANTHER" id="PTHR42837">
    <property type="entry name" value="REGULATOR OF SIGMA-E PROTEASE RSEP"/>
    <property type="match status" value="1"/>
</dbReference>
<dbReference type="Pfam" id="PF13180">
    <property type="entry name" value="PDZ_2"/>
    <property type="match status" value="1"/>
</dbReference>
<dbReference type="Pfam" id="PF02163">
    <property type="entry name" value="Peptidase_M50"/>
    <property type="match status" value="1"/>
</dbReference>
<dbReference type="SUPFAM" id="SSF50156">
    <property type="entry name" value="PDZ domain-like"/>
    <property type="match status" value="1"/>
</dbReference>
<protein>
    <recommendedName>
        <fullName>Putative zinc metalloprotease BH06270</fullName>
        <ecNumber>3.4.24.-</ecNumber>
    </recommendedName>
</protein>
<keyword id="KW-0997">Cell inner membrane</keyword>
<keyword id="KW-1003">Cell membrane</keyword>
<keyword id="KW-0378">Hydrolase</keyword>
<keyword id="KW-0472">Membrane</keyword>
<keyword id="KW-0479">Metal-binding</keyword>
<keyword id="KW-0482">Metalloprotease</keyword>
<keyword id="KW-0645">Protease</keyword>
<keyword id="KW-0812">Transmembrane</keyword>
<keyword id="KW-1133">Transmembrane helix</keyword>
<keyword id="KW-0862">Zinc</keyword>